<name>VF184_ASFWA</name>
<proteinExistence type="inferred from homology"/>
<comment type="subcellular location">
    <subcellularLocation>
        <location evidence="1">Virion</location>
    </subcellularLocation>
</comment>
<comment type="induction">
    <text evidence="2">Expressed in the late phase of the viral replicative cycle.</text>
</comment>
<comment type="similarity">
    <text evidence="2">Belongs to the asfivirus E184L family.</text>
</comment>
<sequence>MKTFITCTSVKNYFRQHLKTNQRISSELISYVCTILNHICHQYLQNPQAQEEEWFALIKELPIIKDGLSKEERFFSSGVKHFLHEYKITPENQEKFQKMLNAITEQLMSRLCKVFSIMIQRQGFLKTQTLMYSHLFTILSILMVADNLYGEQDPTEFFSLIIEQTKTIKKKKKSSSEEEESHEE</sequence>
<reference key="1">
    <citation type="submission" date="2003-03" db="EMBL/GenBank/DDBJ databases">
        <title>African swine fever virus genomes.</title>
        <authorList>
            <person name="Kutish G.F."/>
            <person name="Rock D.L."/>
        </authorList>
    </citation>
    <scope>NUCLEOTIDE SEQUENCE [LARGE SCALE GENOMIC DNA]</scope>
</reference>
<organism>
    <name type="scientific">African swine fever virus (isolate Warthog/Namibia/Wart80/1980)</name>
    <name type="common">ASFV</name>
    <dbReference type="NCBI Taxonomy" id="561444"/>
    <lineage>
        <taxon>Viruses</taxon>
        <taxon>Varidnaviria</taxon>
        <taxon>Bamfordvirae</taxon>
        <taxon>Nucleocytoviricota</taxon>
        <taxon>Pokkesviricetes</taxon>
        <taxon>Asfuvirales</taxon>
        <taxon>Asfarviridae</taxon>
        <taxon>Asfivirus</taxon>
        <taxon>African swine fever virus</taxon>
    </lineage>
</organism>
<gene>
    <name type="ordered locus">War-135</name>
</gene>
<organismHost>
    <name type="scientific">Ornithodoros</name>
    <name type="common">relapsing fever ticks</name>
    <dbReference type="NCBI Taxonomy" id="6937"/>
</organismHost>
<organismHost>
    <name type="scientific">Phacochoerus aethiopicus</name>
    <name type="common">Warthog</name>
    <dbReference type="NCBI Taxonomy" id="85517"/>
</organismHost>
<organismHost>
    <name type="scientific">Phacochoerus africanus</name>
    <name type="common">Warthog</name>
    <dbReference type="NCBI Taxonomy" id="41426"/>
</organismHost>
<organismHost>
    <name type="scientific">Potamochoerus larvatus</name>
    <name type="common">Bushpig</name>
    <dbReference type="NCBI Taxonomy" id="273792"/>
</organismHost>
<organismHost>
    <name type="scientific">Sus scrofa</name>
    <name type="common">Pig</name>
    <dbReference type="NCBI Taxonomy" id="9823"/>
</organismHost>
<evidence type="ECO:0000250" key="1">
    <source>
        <dbReference type="UniProtKB" id="Q65193"/>
    </source>
</evidence>
<evidence type="ECO:0000305" key="2"/>
<feature type="chain" id="PRO_0000373576" description="Uncharacterized protein E184L">
    <location>
        <begin position="1"/>
        <end position="184"/>
    </location>
</feature>
<keyword id="KW-0426">Late protein</keyword>
<keyword id="KW-0946">Virion</keyword>
<dbReference type="EMBL" id="AY261366">
    <property type="status" value="NOT_ANNOTATED_CDS"/>
    <property type="molecule type" value="Genomic_DNA"/>
</dbReference>
<dbReference type="Proteomes" id="UP000000858">
    <property type="component" value="Segment"/>
</dbReference>
<dbReference type="GO" id="GO:0044423">
    <property type="term" value="C:virion component"/>
    <property type="evidence" value="ECO:0007669"/>
    <property type="project" value="UniProtKB-KW"/>
</dbReference>
<accession>P0CA89</accession>
<protein>
    <recommendedName>
        <fullName>Uncharacterized protein E184L</fullName>
        <shortName>pE184L</shortName>
    </recommendedName>
</protein>